<gene>
    <name evidence="1" type="primary">serS</name>
    <name type="ordered locus">SGO_1683</name>
</gene>
<evidence type="ECO:0000255" key="1">
    <source>
        <dbReference type="HAMAP-Rule" id="MF_00176"/>
    </source>
</evidence>
<organism>
    <name type="scientific">Streptococcus gordonii (strain Challis / ATCC 35105 / BCRC 15272 / CH1 / DL1 / V288)</name>
    <dbReference type="NCBI Taxonomy" id="467705"/>
    <lineage>
        <taxon>Bacteria</taxon>
        <taxon>Bacillati</taxon>
        <taxon>Bacillota</taxon>
        <taxon>Bacilli</taxon>
        <taxon>Lactobacillales</taxon>
        <taxon>Streptococcaceae</taxon>
        <taxon>Streptococcus</taxon>
    </lineage>
</organism>
<reference key="1">
    <citation type="journal article" date="2007" name="J. Bacteriol.">
        <title>Genome-wide transcriptional changes in Streptococcus gordonii in response to competence signaling peptide.</title>
        <authorList>
            <person name="Vickerman M.M."/>
            <person name="Iobst S."/>
            <person name="Jesionowski A.M."/>
            <person name="Gill S.R."/>
        </authorList>
    </citation>
    <scope>NUCLEOTIDE SEQUENCE [LARGE SCALE GENOMIC DNA]</scope>
    <source>
        <strain>Challis / ATCC 35105 / BCRC 15272 / CH1 / DL1 / V288</strain>
    </source>
</reference>
<accession>A8AYV0</accession>
<comment type="function">
    <text evidence="1">Catalyzes the attachment of serine to tRNA(Ser). Is also able to aminoacylate tRNA(Sec) with serine, to form the misacylated tRNA L-seryl-tRNA(Sec), which will be further converted into selenocysteinyl-tRNA(Sec).</text>
</comment>
<comment type="catalytic activity">
    <reaction evidence="1">
        <text>tRNA(Ser) + L-serine + ATP = L-seryl-tRNA(Ser) + AMP + diphosphate + H(+)</text>
        <dbReference type="Rhea" id="RHEA:12292"/>
        <dbReference type="Rhea" id="RHEA-COMP:9669"/>
        <dbReference type="Rhea" id="RHEA-COMP:9703"/>
        <dbReference type="ChEBI" id="CHEBI:15378"/>
        <dbReference type="ChEBI" id="CHEBI:30616"/>
        <dbReference type="ChEBI" id="CHEBI:33019"/>
        <dbReference type="ChEBI" id="CHEBI:33384"/>
        <dbReference type="ChEBI" id="CHEBI:78442"/>
        <dbReference type="ChEBI" id="CHEBI:78533"/>
        <dbReference type="ChEBI" id="CHEBI:456215"/>
        <dbReference type="EC" id="6.1.1.11"/>
    </reaction>
</comment>
<comment type="catalytic activity">
    <reaction evidence="1">
        <text>tRNA(Sec) + L-serine + ATP = L-seryl-tRNA(Sec) + AMP + diphosphate + H(+)</text>
        <dbReference type="Rhea" id="RHEA:42580"/>
        <dbReference type="Rhea" id="RHEA-COMP:9742"/>
        <dbReference type="Rhea" id="RHEA-COMP:10128"/>
        <dbReference type="ChEBI" id="CHEBI:15378"/>
        <dbReference type="ChEBI" id="CHEBI:30616"/>
        <dbReference type="ChEBI" id="CHEBI:33019"/>
        <dbReference type="ChEBI" id="CHEBI:33384"/>
        <dbReference type="ChEBI" id="CHEBI:78442"/>
        <dbReference type="ChEBI" id="CHEBI:78533"/>
        <dbReference type="ChEBI" id="CHEBI:456215"/>
        <dbReference type="EC" id="6.1.1.11"/>
    </reaction>
</comment>
<comment type="pathway">
    <text evidence="1">Aminoacyl-tRNA biosynthesis; selenocysteinyl-tRNA(Sec) biosynthesis; L-seryl-tRNA(Sec) from L-serine and tRNA(Sec): step 1/1.</text>
</comment>
<comment type="subunit">
    <text evidence="1">Homodimer. The tRNA molecule binds across the dimer.</text>
</comment>
<comment type="subcellular location">
    <subcellularLocation>
        <location evidence="1">Cytoplasm</location>
    </subcellularLocation>
</comment>
<comment type="domain">
    <text evidence="1">Consists of two distinct domains, a catalytic core and a N-terminal extension that is involved in tRNA binding.</text>
</comment>
<comment type="similarity">
    <text evidence="1">Belongs to the class-II aminoacyl-tRNA synthetase family. Type-1 seryl-tRNA synthetase subfamily.</text>
</comment>
<dbReference type="EC" id="6.1.1.11" evidence="1"/>
<dbReference type="EMBL" id="CP000725">
    <property type="protein sequence ID" value="ABV10891.1"/>
    <property type="molecule type" value="Genomic_DNA"/>
</dbReference>
<dbReference type="RefSeq" id="WP_012130739.1">
    <property type="nucleotide sequence ID" value="NC_009785.1"/>
</dbReference>
<dbReference type="SMR" id="A8AYV0"/>
<dbReference type="STRING" id="467705.SGO_1683"/>
<dbReference type="KEGG" id="sgo:SGO_1683"/>
<dbReference type="eggNOG" id="COG0172">
    <property type="taxonomic scope" value="Bacteria"/>
</dbReference>
<dbReference type="HOGENOM" id="CLU_023797_1_1_9"/>
<dbReference type="UniPathway" id="UPA00906">
    <property type="reaction ID" value="UER00895"/>
</dbReference>
<dbReference type="Proteomes" id="UP000001131">
    <property type="component" value="Chromosome"/>
</dbReference>
<dbReference type="GO" id="GO:0005737">
    <property type="term" value="C:cytoplasm"/>
    <property type="evidence" value="ECO:0007669"/>
    <property type="project" value="UniProtKB-SubCell"/>
</dbReference>
<dbReference type="GO" id="GO:0005524">
    <property type="term" value="F:ATP binding"/>
    <property type="evidence" value="ECO:0007669"/>
    <property type="project" value="UniProtKB-UniRule"/>
</dbReference>
<dbReference type="GO" id="GO:0140096">
    <property type="term" value="F:catalytic activity, acting on a protein"/>
    <property type="evidence" value="ECO:0007669"/>
    <property type="project" value="UniProtKB-ARBA"/>
</dbReference>
<dbReference type="GO" id="GO:0004828">
    <property type="term" value="F:serine-tRNA ligase activity"/>
    <property type="evidence" value="ECO:0007669"/>
    <property type="project" value="UniProtKB-UniRule"/>
</dbReference>
<dbReference type="GO" id="GO:0016740">
    <property type="term" value="F:transferase activity"/>
    <property type="evidence" value="ECO:0007669"/>
    <property type="project" value="UniProtKB-ARBA"/>
</dbReference>
<dbReference type="GO" id="GO:0016260">
    <property type="term" value="P:selenocysteine biosynthetic process"/>
    <property type="evidence" value="ECO:0007669"/>
    <property type="project" value="UniProtKB-UniRule"/>
</dbReference>
<dbReference type="GO" id="GO:0006434">
    <property type="term" value="P:seryl-tRNA aminoacylation"/>
    <property type="evidence" value="ECO:0007669"/>
    <property type="project" value="UniProtKB-UniRule"/>
</dbReference>
<dbReference type="CDD" id="cd00770">
    <property type="entry name" value="SerRS_core"/>
    <property type="match status" value="1"/>
</dbReference>
<dbReference type="Gene3D" id="3.30.930.10">
    <property type="entry name" value="Bira Bifunctional Protein, Domain 2"/>
    <property type="match status" value="1"/>
</dbReference>
<dbReference type="Gene3D" id="1.10.287.40">
    <property type="entry name" value="Serine-tRNA synthetase, tRNA binding domain"/>
    <property type="match status" value="1"/>
</dbReference>
<dbReference type="HAMAP" id="MF_00176">
    <property type="entry name" value="Ser_tRNA_synth_type1"/>
    <property type="match status" value="1"/>
</dbReference>
<dbReference type="InterPro" id="IPR002314">
    <property type="entry name" value="aa-tRNA-synt_IIb"/>
</dbReference>
<dbReference type="InterPro" id="IPR006195">
    <property type="entry name" value="aa-tRNA-synth_II"/>
</dbReference>
<dbReference type="InterPro" id="IPR045864">
    <property type="entry name" value="aa-tRNA-synth_II/BPL/LPL"/>
</dbReference>
<dbReference type="InterPro" id="IPR002317">
    <property type="entry name" value="Ser-tRNA-ligase_type_1"/>
</dbReference>
<dbReference type="InterPro" id="IPR015866">
    <property type="entry name" value="Ser-tRNA-synth_1_N"/>
</dbReference>
<dbReference type="InterPro" id="IPR042103">
    <property type="entry name" value="SerRS_1_N_sf"/>
</dbReference>
<dbReference type="InterPro" id="IPR033729">
    <property type="entry name" value="SerRS_core"/>
</dbReference>
<dbReference type="InterPro" id="IPR010978">
    <property type="entry name" value="tRNA-bd_arm"/>
</dbReference>
<dbReference type="NCBIfam" id="TIGR00414">
    <property type="entry name" value="serS"/>
    <property type="match status" value="1"/>
</dbReference>
<dbReference type="PANTHER" id="PTHR43697:SF1">
    <property type="entry name" value="SERINE--TRNA LIGASE"/>
    <property type="match status" value="1"/>
</dbReference>
<dbReference type="PANTHER" id="PTHR43697">
    <property type="entry name" value="SERYL-TRNA SYNTHETASE"/>
    <property type="match status" value="1"/>
</dbReference>
<dbReference type="Pfam" id="PF02403">
    <property type="entry name" value="Seryl_tRNA_N"/>
    <property type="match status" value="1"/>
</dbReference>
<dbReference type="Pfam" id="PF00587">
    <property type="entry name" value="tRNA-synt_2b"/>
    <property type="match status" value="1"/>
</dbReference>
<dbReference type="PIRSF" id="PIRSF001529">
    <property type="entry name" value="Ser-tRNA-synth_IIa"/>
    <property type="match status" value="1"/>
</dbReference>
<dbReference type="PRINTS" id="PR00981">
    <property type="entry name" value="TRNASYNTHSER"/>
</dbReference>
<dbReference type="SUPFAM" id="SSF55681">
    <property type="entry name" value="Class II aaRS and biotin synthetases"/>
    <property type="match status" value="1"/>
</dbReference>
<dbReference type="SUPFAM" id="SSF46589">
    <property type="entry name" value="tRNA-binding arm"/>
    <property type="match status" value="1"/>
</dbReference>
<dbReference type="PROSITE" id="PS50862">
    <property type="entry name" value="AA_TRNA_LIGASE_II"/>
    <property type="match status" value="1"/>
</dbReference>
<feature type="chain" id="PRO_1000077221" description="Serine--tRNA ligase">
    <location>
        <begin position="1"/>
        <end position="425"/>
    </location>
</feature>
<feature type="binding site" evidence="1">
    <location>
        <begin position="230"/>
        <end position="232"/>
    </location>
    <ligand>
        <name>L-serine</name>
        <dbReference type="ChEBI" id="CHEBI:33384"/>
    </ligand>
</feature>
<feature type="binding site" evidence="1">
    <location>
        <begin position="261"/>
        <end position="263"/>
    </location>
    <ligand>
        <name>ATP</name>
        <dbReference type="ChEBI" id="CHEBI:30616"/>
    </ligand>
</feature>
<feature type="binding site" evidence="1">
    <location>
        <position position="284"/>
    </location>
    <ligand>
        <name>L-serine</name>
        <dbReference type="ChEBI" id="CHEBI:33384"/>
    </ligand>
</feature>
<feature type="binding site" evidence="1">
    <location>
        <begin position="348"/>
        <end position="351"/>
    </location>
    <ligand>
        <name>ATP</name>
        <dbReference type="ChEBI" id="CHEBI:30616"/>
    </ligand>
</feature>
<feature type="binding site" evidence="1">
    <location>
        <position position="384"/>
    </location>
    <ligand>
        <name>L-serine</name>
        <dbReference type="ChEBI" id="CHEBI:33384"/>
    </ligand>
</feature>
<protein>
    <recommendedName>
        <fullName evidence="1">Serine--tRNA ligase</fullName>
        <ecNumber evidence="1">6.1.1.11</ecNumber>
    </recommendedName>
    <alternativeName>
        <fullName evidence="1">Seryl-tRNA synthetase</fullName>
        <shortName evidence="1">SerRS</shortName>
    </alternativeName>
    <alternativeName>
        <fullName evidence="1">Seryl-tRNA(Ser/Sec) synthetase</fullName>
    </alternativeName>
</protein>
<sequence length="425" mass="48026">MLDLKRIRTDFDTVAAKLATRGVDAATLNQMKTIDKERRDLLVKVEELKAERNTVSAEIAQAKRNKENADDKIAAMQKLSAEVKNLDATLAELDAKLTEFTTTLPNIPHESVPVGADEDENVEVRRWGTPRQFDFEAKAHWDLGEDLDILDWERGAKVTGARFLFYKGLGARLERAIYNFMLDEHGKEGYTEVITPYMVNHDSMFGTGQYPKFKEDTFELSDTNFVLIPTAEVPLTNYYRDEILDGKELPIYFTAMSPSFRSEAGSAGRDTRGLIRLHQFHKVEMVKFAKPEESYEELEKMTANAENILQKLNLPYRVVALCTGDMGFSAAKTYDLEVWIPAQNTYREISSCSNTEDFQARRAQIRYRDEADGKVKLLHTLNGSGLAVGRTVAAILENYQNEDGSVTIPEVLRPYMGGLEVIAPK</sequence>
<name>SYS_STRGC</name>
<keyword id="KW-0030">Aminoacyl-tRNA synthetase</keyword>
<keyword id="KW-0067">ATP-binding</keyword>
<keyword id="KW-0963">Cytoplasm</keyword>
<keyword id="KW-0436">Ligase</keyword>
<keyword id="KW-0547">Nucleotide-binding</keyword>
<keyword id="KW-0648">Protein biosynthesis</keyword>
<keyword id="KW-1185">Reference proteome</keyword>
<proteinExistence type="inferred from homology"/>